<feature type="chain" id="PRO_0000158463" description="Ribose-5-phosphate isomerase A">
    <location>
        <begin position="1"/>
        <end position="228"/>
    </location>
</feature>
<feature type="active site" description="Proton acceptor" evidence="1">
    <location>
        <position position="107"/>
    </location>
</feature>
<feature type="binding site" evidence="1">
    <location>
        <begin position="29"/>
        <end position="32"/>
    </location>
    <ligand>
        <name>substrate</name>
    </ligand>
</feature>
<feature type="binding site" evidence="1">
    <location>
        <begin position="85"/>
        <end position="88"/>
    </location>
    <ligand>
        <name>substrate</name>
    </ligand>
</feature>
<feature type="binding site" evidence="1">
    <location>
        <begin position="98"/>
        <end position="101"/>
    </location>
    <ligand>
        <name>substrate</name>
    </ligand>
</feature>
<feature type="binding site" evidence="1">
    <location>
        <position position="125"/>
    </location>
    <ligand>
        <name>substrate</name>
    </ligand>
</feature>
<proteinExistence type="inferred from homology"/>
<name>RPIA_STAAC</name>
<organism>
    <name type="scientific">Staphylococcus aureus (strain COL)</name>
    <dbReference type="NCBI Taxonomy" id="93062"/>
    <lineage>
        <taxon>Bacteria</taxon>
        <taxon>Bacillati</taxon>
        <taxon>Bacillota</taxon>
        <taxon>Bacilli</taxon>
        <taxon>Bacillales</taxon>
        <taxon>Staphylococcaceae</taxon>
        <taxon>Staphylococcus</taxon>
    </lineage>
</organism>
<protein>
    <recommendedName>
        <fullName evidence="1">Ribose-5-phosphate isomerase A</fullName>
        <ecNumber evidence="1">5.3.1.6</ecNumber>
    </recommendedName>
    <alternativeName>
        <fullName evidence="1">Phosphoriboisomerase A</fullName>
        <shortName evidence="1">PRI</shortName>
    </alternativeName>
</protein>
<accession>Q5HDM1</accession>
<gene>
    <name evidence="1" type="primary">rpiA</name>
    <name type="ordered locus">SACOL2329</name>
</gene>
<sequence>MKDVKALKLMTLNDVLSQINGDMTLGIGTGSTMELLLPQMAQLIKERGYNITGVCTSNKIAFLAKELGIKICEINDVDHIDLAIDGADEVDPSLNIIKGGGGALFREKVIDEMASRFVVVVDETKIVQYLGETFKLPVEVDKFNWYQILRKIESYADIKVERRVNEDVAFITDNGNYILDCKLPKGIDPYKFHEYLIHLTGVFETGYFLDMADQVIVGTQEGVKILEK</sequence>
<dbReference type="EC" id="5.3.1.6" evidence="1"/>
<dbReference type="EMBL" id="CP000046">
    <property type="protein sequence ID" value="AAW37158.1"/>
    <property type="molecule type" value="Genomic_DNA"/>
</dbReference>
<dbReference type="RefSeq" id="WP_000655865.1">
    <property type="nucleotide sequence ID" value="NC_002951.2"/>
</dbReference>
<dbReference type="SMR" id="Q5HDM1"/>
<dbReference type="KEGG" id="sac:SACOL2329"/>
<dbReference type="HOGENOM" id="CLU_056590_1_0_9"/>
<dbReference type="UniPathway" id="UPA00115">
    <property type="reaction ID" value="UER00412"/>
</dbReference>
<dbReference type="Proteomes" id="UP000000530">
    <property type="component" value="Chromosome"/>
</dbReference>
<dbReference type="GO" id="GO:0005829">
    <property type="term" value="C:cytosol"/>
    <property type="evidence" value="ECO:0007669"/>
    <property type="project" value="TreeGrafter"/>
</dbReference>
<dbReference type="GO" id="GO:0004751">
    <property type="term" value="F:ribose-5-phosphate isomerase activity"/>
    <property type="evidence" value="ECO:0007669"/>
    <property type="project" value="UniProtKB-UniRule"/>
</dbReference>
<dbReference type="GO" id="GO:0006014">
    <property type="term" value="P:D-ribose metabolic process"/>
    <property type="evidence" value="ECO:0007669"/>
    <property type="project" value="TreeGrafter"/>
</dbReference>
<dbReference type="GO" id="GO:0009052">
    <property type="term" value="P:pentose-phosphate shunt, non-oxidative branch"/>
    <property type="evidence" value="ECO:0007669"/>
    <property type="project" value="UniProtKB-UniRule"/>
</dbReference>
<dbReference type="CDD" id="cd01398">
    <property type="entry name" value="RPI_A"/>
    <property type="match status" value="1"/>
</dbReference>
<dbReference type="FunFam" id="3.40.50.1360:FF:000001">
    <property type="entry name" value="Ribose-5-phosphate isomerase A"/>
    <property type="match status" value="1"/>
</dbReference>
<dbReference type="Gene3D" id="3.30.70.260">
    <property type="match status" value="1"/>
</dbReference>
<dbReference type="Gene3D" id="3.40.50.1360">
    <property type="match status" value="1"/>
</dbReference>
<dbReference type="HAMAP" id="MF_00170">
    <property type="entry name" value="Rib_5P_isom_A"/>
    <property type="match status" value="1"/>
</dbReference>
<dbReference type="InterPro" id="IPR037171">
    <property type="entry name" value="NagB/RpiA_transferase-like"/>
</dbReference>
<dbReference type="InterPro" id="IPR020672">
    <property type="entry name" value="Ribose5P_isomerase_typA_subgr"/>
</dbReference>
<dbReference type="InterPro" id="IPR004788">
    <property type="entry name" value="Ribose5P_isomerase_type_A"/>
</dbReference>
<dbReference type="NCBIfam" id="NF001924">
    <property type="entry name" value="PRK00702.1"/>
    <property type="match status" value="1"/>
</dbReference>
<dbReference type="NCBIfam" id="NF010585">
    <property type="entry name" value="PRK13978.1"/>
    <property type="match status" value="1"/>
</dbReference>
<dbReference type="NCBIfam" id="TIGR00021">
    <property type="entry name" value="rpiA"/>
    <property type="match status" value="1"/>
</dbReference>
<dbReference type="PANTHER" id="PTHR11934">
    <property type="entry name" value="RIBOSE-5-PHOSPHATE ISOMERASE"/>
    <property type="match status" value="1"/>
</dbReference>
<dbReference type="PANTHER" id="PTHR11934:SF0">
    <property type="entry name" value="RIBOSE-5-PHOSPHATE ISOMERASE"/>
    <property type="match status" value="1"/>
</dbReference>
<dbReference type="Pfam" id="PF06026">
    <property type="entry name" value="Rib_5-P_isom_A"/>
    <property type="match status" value="1"/>
</dbReference>
<dbReference type="SUPFAM" id="SSF75445">
    <property type="entry name" value="D-ribose-5-phosphate isomerase (RpiA), lid domain"/>
    <property type="match status" value="1"/>
</dbReference>
<dbReference type="SUPFAM" id="SSF100950">
    <property type="entry name" value="NagB/RpiA/CoA transferase-like"/>
    <property type="match status" value="1"/>
</dbReference>
<reference key="1">
    <citation type="journal article" date="2005" name="J. Bacteriol.">
        <title>Insights on evolution of virulence and resistance from the complete genome analysis of an early methicillin-resistant Staphylococcus aureus strain and a biofilm-producing methicillin-resistant Staphylococcus epidermidis strain.</title>
        <authorList>
            <person name="Gill S.R."/>
            <person name="Fouts D.E."/>
            <person name="Archer G.L."/>
            <person name="Mongodin E.F."/>
            <person name="DeBoy R.T."/>
            <person name="Ravel J."/>
            <person name="Paulsen I.T."/>
            <person name="Kolonay J.F."/>
            <person name="Brinkac L.M."/>
            <person name="Beanan M.J."/>
            <person name="Dodson R.J."/>
            <person name="Daugherty S.C."/>
            <person name="Madupu R."/>
            <person name="Angiuoli S.V."/>
            <person name="Durkin A.S."/>
            <person name="Haft D.H."/>
            <person name="Vamathevan J.J."/>
            <person name="Khouri H."/>
            <person name="Utterback T.R."/>
            <person name="Lee C."/>
            <person name="Dimitrov G."/>
            <person name="Jiang L."/>
            <person name="Qin H."/>
            <person name="Weidman J."/>
            <person name="Tran K."/>
            <person name="Kang K.H."/>
            <person name="Hance I.R."/>
            <person name="Nelson K.E."/>
            <person name="Fraser C.M."/>
        </authorList>
    </citation>
    <scope>NUCLEOTIDE SEQUENCE [LARGE SCALE GENOMIC DNA]</scope>
    <source>
        <strain>COL</strain>
    </source>
</reference>
<comment type="function">
    <text evidence="1">Catalyzes the reversible conversion of ribose-5-phosphate to ribulose 5-phosphate.</text>
</comment>
<comment type="catalytic activity">
    <reaction evidence="1">
        <text>aldehydo-D-ribose 5-phosphate = D-ribulose 5-phosphate</text>
        <dbReference type="Rhea" id="RHEA:14657"/>
        <dbReference type="ChEBI" id="CHEBI:58121"/>
        <dbReference type="ChEBI" id="CHEBI:58273"/>
        <dbReference type="EC" id="5.3.1.6"/>
    </reaction>
</comment>
<comment type="pathway">
    <text evidence="1">Carbohydrate degradation; pentose phosphate pathway; D-ribose 5-phosphate from D-ribulose 5-phosphate (non-oxidative stage): step 1/1.</text>
</comment>
<comment type="subunit">
    <text evidence="1">Homodimer.</text>
</comment>
<comment type="similarity">
    <text evidence="1">Belongs to the ribose 5-phosphate isomerase family.</text>
</comment>
<evidence type="ECO:0000255" key="1">
    <source>
        <dbReference type="HAMAP-Rule" id="MF_00170"/>
    </source>
</evidence>
<keyword id="KW-0413">Isomerase</keyword>